<gene>
    <name type="primary">MT2</name>
</gene>
<comment type="function">
    <text>Metallothioneins have a high content of cysteine residues that bind various heavy metals; these proteins are transcriptionally regulated by both heavy metals and glucocorticoids.</text>
</comment>
<comment type="domain">
    <text>Class I metallothioneins contain 2 metal-binding domains: four divalent ions are chelated within cluster A of the alpha domain and are coordinated via cysteinyl thiolate bridges to 11 cysteine ligands. Cluster B, the corresponding region within the beta domain, can ligate three divalent ions to 9 cysteines.</text>
</comment>
<comment type="miscellaneous">
    <text>This metallothionein binds zinc.</text>
</comment>
<comment type="similarity">
    <text evidence="3">Belongs to the metallothionein superfamily. Type 1 family.</text>
</comment>
<dbReference type="EMBL" id="V01532">
    <property type="protein sequence ID" value="CAA24771.1"/>
    <property type="molecule type" value="Genomic_DNA"/>
</dbReference>
<dbReference type="PIR" id="A03272">
    <property type="entry name" value="SMMK2"/>
</dbReference>
<dbReference type="SMR" id="P68304"/>
<dbReference type="GO" id="GO:0005737">
    <property type="term" value="C:cytoplasm"/>
    <property type="evidence" value="ECO:0000250"/>
    <property type="project" value="UniProtKB"/>
</dbReference>
<dbReference type="GO" id="GO:0005634">
    <property type="term" value="C:nucleus"/>
    <property type="evidence" value="ECO:0000250"/>
    <property type="project" value="UniProtKB"/>
</dbReference>
<dbReference type="GO" id="GO:0008270">
    <property type="term" value="F:zinc ion binding"/>
    <property type="evidence" value="ECO:0000250"/>
    <property type="project" value="UniProtKB"/>
</dbReference>
<dbReference type="GO" id="GO:0071276">
    <property type="term" value="P:cellular response to cadmium ion"/>
    <property type="evidence" value="ECO:0007669"/>
    <property type="project" value="TreeGrafter"/>
</dbReference>
<dbReference type="GO" id="GO:0071280">
    <property type="term" value="P:cellular response to copper ion"/>
    <property type="evidence" value="ECO:0007669"/>
    <property type="project" value="TreeGrafter"/>
</dbReference>
<dbReference type="GO" id="GO:0071294">
    <property type="term" value="P:cellular response to zinc ion"/>
    <property type="evidence" value="ECO:0000250"/>
    <property type="project" value="UniProtKB"/>
</dbReference>
<dbReference type="GO" id="GO:0010273">
    <property type="term" value="P:detoxification of copper ion"/>
    <property type="evidence" value="ECO:0007669"/>
    <property type="project" value="TreeGrafter"/>
</dbReference>
<dbReference type="GO" id="GO:0006882">
    <property type="term" value="P:intracellular zinc ion homeostasis"/>
    <property type="evidence" value="ECO:0007669"/>
    <property type="project" value="TreeGrafter"/>
</dbReference>
<dbReference type="GO" id="GO:0045926">
    <property type="term" value="P:negative regulation of growth"/>
    <property type="evidence" value="ECO:0000250"/>
    <property type="project" value="UniProtKB"/>
</dbReference>
<dbReference type="FunFam" id="4.10.10.10:FF:000001">
    <property type="entry name" value="Metallothionein"/>
    <property type="match status" value="1"/>
</dbReference>
<dbReference type="Gene3D" id="4.10.10.10">
    <property type="entry name" value="Metallothionein Isoform II"/>
    <property type="match status" value="1"/>
</dbReference>
<dbReference type="InterPro" id="IPR017854">
    <property type="entry name" value="Metalthion_dom_sf"/>
</dbReference>
<dbReference type="InterPro" id="IPR023587">
    <property type="entry name" value="Metalthion_dom_sf_vert"/>
</dbReference>
<dbReference type="InterPro" id="IPR000006">
    <property type="entry name" value="Metalthion_vert"/>
</dbReference>
<dbReference type="InterPro" id="IPR018064">
    <property type="entry name" value="Metalthion_vert_metal_BS"/>
</dbReference>
<dbReference type="PANTHER" id="PTHR23299">
    <property type="entry name" value="METALLOTHIONEIN"/>
    <property type="match status" value="1"/>
</dbReference>
<dbReference type="PANTHER" id="PTHR23299:SF60">
    <property type="entry name" value="METALLOTHIONEIN-2"/>
    <property type="match status" value="1"/>
</dbReference>
<dbReference type="Pfam" id="PF00131">
    <property type="entry name" value="Metallothio"/>
    <property type="match status" value="1"/>
</dbReference>
<dbReference type="PRINTS" id="PR00860">
    <property type="entry name" value="MTVERTEBRATE"/>
</dbReference>
<dbReference type="SUPFAM" id="SSF57868">
    <property type="entry name" value="Metallothionein"/>
    <property type="match status" value="1"/>
</dbReference>
<dbReference type="PROSITE" id="PS00203">
    <property type="entry name" value="METALLOTHIONEIN_VRT"/>
    <property type="match status" value="1"/>
</dbReference>
<evidence type="ECO:0000250" key="1">
    <source>
        <dbReference type="UniProtKB" id="P02795"/>
    </source>
</evidence>
<evidence type="ECO:0000250" key="2">
    <source>
        <dbReference type="UniProtKB" id="P68301"/>
    </source>
</evidence>
<evidence type="ECO:0000305" key="3"/>
<reference key="1">
    <citation type="journal article" date="1983" name="Gene">
        <title>Cloning and sequence analysis of two monkey metallothionein cDNAs.</title>
        <authorList>
            <person name="Schmidt C.J."/>
            <person name="Hamer D.H."/>
        </authorList>
    </citation>
    <scope>NUCLEOTIDE SEQUENCE [GENOMIC DNA]</scope>
    <source>
        <tissue>Kidney</tissue>
    </source>
</reference>
<feature type="chain" id="PRO_0000197233" description="Metallothionein-2">
    <location>
        <begin position="1"/>
        <end position="61"/>
    </location>
</feature>
<feature type="region of interest" description="Beta">
    <location>
        <begin position="1"/>
        <end position="29"/>
    </location>
</feature>
<feature type="region of interest" description="Antigenic epitope">
    <location>
        <begin position="20"/>
        <end position="25"/>
    </location>
</feature>
<feature type="region of interest" description="Alpha">
    <location>
        <begin position="30"/>
        <end position="61"/>
    </location>
</feature>
<feature type="binding site" evidence="1">
    <location>
        <position position="5"/>
    </location>
    <ligand>
        <name>a divalent metal cation</name>
        <dbReference type="ChEBI" id="CHEBI:60240"/>
        <label>1</label>
        <note>in cluster B</note>
    </ligand>
</feature>
<feature type="binding site" evidence="1">
    <location>
        <position position="7"/>
    </location>
    <ligand>
        <name>a divalent metal cation</name>
        <dbReference type="ChEBI" id="CHEBI:60240"/>
        <label>1</label>
        <note>in cluster B</note>
    </ligand>
</feature>
<feature type="binding site" evidence="1">
    <location>
        <position position="7"/>
    </location>
    <ligand>
        <name>a divalent metal cation</name>
        <dbReference type="ChEBI" id="CHEBI:60240"/>
        <label>2</label>
        <note>in cluster B</note>
    </ligand>
</feature>
<feature type="binding site" evidence="1">
    <location>
        <position position="13"/>
    </location>
    <ligand>
        <name>a divalent metal cation</name>
        <dbReference type="ChEBI" id="CHEBI:60240"/>
        <label>2</label>
        <note>in cluster B</note>
    </ligand>
</feature>
<feature type="binding site" evidence="1">
    <location>
        <position position="15"/>
    </location>
    <ligand>
        <name>a divalent metal cation</name>
        <dbReference type="ChEBI" id="CHEBI:60240"/>
        <label>2</label>
        <note>in cluster B</note>
    </ligand>
</feature>
<feature type="binding site" evidence="1">
    <location>
        <position position="15"/>
    </location>
    <ligand>
        <name>a divalent metal cation</name>
        <dbReference type="ChEBI" id="CHEBI:60240"/>
        <label>3</label>
        <note>in cluster B</note>
    </ligand>
</feature>
<feature type="binding site" evidence="1">
    <location>
        <position position="19"/>
    </location>
    <ligand>
        <name>a divalent metal cation</name>
        <dbReference type="ChEBI" id="CHEBI:60240"/>
        <label>3</label>
        <note>in cluster B</note>
    </ligand>
</feature>
<feature type="binding site" evidence="1">
    <location>
        <position position="21"/>
    </location>
    <ligand>
        <name>a divalent metal cation</name>
        <dbReference type="ChEBI" id="CHEBI:60240"/>
        <label>1</label>
        <note>in cluster B</note>
    </ligand>
</feature>
<feature type="binding site" evidence="1">
    <location>
        <position position="24"/>
    </location>
    <ligand>
        <name>a divalent metal cation</name>
        <dbReference type="ChEBI" id="CHEBI:60240"/>
        <label>1</label>
        <note>in cluster B</note>
    </ligand>
</feature>
<feature type="binding site" evidence="1">
    <location>
        <position position="24"/>
    </location>
    <ligand>
        <name>a divalent metal cation</name>
        <dbReference type="ChEBI" id="CHEBI:60240"/>
        <label>3</label>
        <note>in cluster B</note>
    </ligand>
</feature>
<feature type="binding site" evidence="1">
    <location>
        <position position="26"/>
    </location>
    <ligand>
        <name>a divalent metal cation</name>
        <dbReference type="ChEBI" id="CHEBI:60240"/>
        <label>2</label>
        <note>in cluster B</note>
    </ligand>
</feature>
<feature type="binding site" evidence="1">
    <location>
        <position position="29"/>
    </location>
    <ligand>
        <name>a divalent metal cation</name>
        <dbReference type="ChEBI" id="CHEBI:60240"/>
        <label>3</label>
        <note>in cluster B</note>
    </ligand>
</feature>
<feature type="binding site" evidence="1">
    <location>
        <position position="33"/>
    </location>
    <ligand>
        <name>a divalent metal cation</name>
        <dbReference type="ChEBI" id="CHEBI:60240"/>
        <label>4</label>
        <note>in cluster A</note>
    </ligand>
</feature>
<feature type="binding site" evidence="1">
    <location>
        <position position="34"/>
    </location>
    <ligand>
        <name>a divalent metal cation</name>
        <dbReference type="ChEBI" id="CHEBI:60240"/>
        <label>4</label>
        <note>in cluster A</note>
    </ligand>
</feature>
<feature type="binding site" evidence="1">
    <location>
        <position position="34"/>
    </location>
    <ligand>
        <name>a divalent metal cation</name>
        <dbReference type="ChEBI" id="CHEBI:60240"/>
        <label>5</label>
        <note>in cluster A</note>
    </ligand>
</feature>
<feature type="binding site" evidence="1">
    <location>
        <position position="36"/>
    </location>
    <ligand>
        <name>a divalent metal cation</name>
        <dbReference type="ChEBI" id="CHEBI:60240"/>
        <label>5</label>
        <note>in cluster A</note>
    </ligand>
</feature>
<feature type="binding site" evidence="1">
    <location>
        <position position="37"/>
    </location>
    <ligand>
        <name>a divalent metal cation</name>
        <dbReference type="ChEBI" id="CHEBI:60240"/>
        <label>5</label>
        <note>in cluster A</note>
    </ligand>
</feature>
<feature type="binding site" evidence="1">
    <location>
        <position position="37"/>
    </location>
    <ligand>
        <name>a divalent metal cation</name>
        <dbReference type="ChEBI" id="CHEBI:60240"/>
        <label>6</label>
        <note>in cluster A</note>
    </ligand>
</feature>
<feature type="binding site" evidence="1">
    <location>
        <position position="41"/>
    </location>
    <ligand>
        <name>a divalent metal cation</name>
        <dbReference type="ChEBI" id="CHEBI:60240"/>
        <label>6</label>
        <note>in cluster A</note>
    </ligand>
</feature>
<feature type="binding site" evidence="1">
    <location>
        <position position="44"/>
    </location>
    <ligand>
        <name>a divalent metal cation</name>
        <dbReference type="ChEBI" id="CHEBI:60240"/>
        <label>4</label>
        <note>in cluster A</note>
    </ligand>
</feature>
<feature type="binding site" evidence="1">
    <location>
        <position position="44"/>
    </location>
    <ligand>
        <name>a divalent metal cation</name>
        <dbReference type="ChEBI" id="CHEBI:60240"/>
        <label>6</label>
        <note>in cluster A</note>
    </ligand>
</feature>
<feature type="binding site" evidence="1">
    <location>
        <position position="48"/>
    </location>
    <ligand>
        <name>a divalent metal cation</name>
        <dbReference type="ChEBI" id="CHEBI:60240"/>
        <label>4</label>
        <note>in cluster A</note>
    </ligand>
</feature>
<feature type="binding site" evidence="1">
    <location>
        <position position="50"/>
    </location>
    <ligand>
        <name>a divalent metal cation</name>
        <dbReference type="ChEBI" id="CHEBI:60240"/>
        <label>5</label>
        <note>in cluster A</note>
    </ligand>
</feature>
<feature type="binding site" evidence="1">
    <location>
        <position position="50"/>
    </location>
    <ligand>
        <name>a divalent metal cation</name>
        <dbReference type="ChEBI" id="CHEBI:60240"/>
        <label>7</label>
        <note>in cluster A</note>
    </ligand>
</feature>
<feature type="binding site" evidence="1">
    <location>
        <position position="57"/>
    </location>
    <ligand>
        <name>a divalent metal cation</name>
        <dbReference type="ChEBI" id="CHEBI:60240"/>
        <label>7</label>
        <note>in cluster A</note>
    </ligand>
</feature>
<feature type="binding site" evidence="1">
    <location>
        <position position="59"/>
    </location>
    <ligand>
        <name>a divalent metal cation</name>
        <dbReference type="ChEBI" id="CHEBI:60240"/>
        <label>7</label>
        <note>in cluster A</note>
    </ligand>
</feature>
<feature type="binding site" evidence="1">
    <location>
        <position position="60"/>
    </location>
    <ligand>
        <name>a divalent metal cation</name>
        <dbReference type="ChEBI" id="CHEBI:60240"/>
        <label>6</label>
        <note>in cluster A</note>
    </ligand>
</feature>
<feature type="binding site" evidence="1">
    <location>
        <position position="60"/>
    </location>
    <ligand>
        <name>a divalent metal cation</name>
        <dbReference type="ChEBI" id="CHEBI:60240"/>
        <label>7</label>
        <note>in cluster A</note>
    </ligand>
</feature>
<feature type="modified residue" description="N-acetylmethionine" evidence="2">
    <location>
        <position position="1"/>
    </location>
</feature>
<organism>
    <name type="scientific">Chlorocebus aethiops</name>
    <name type="common">Green monkey</name>
    <name type="synonym">Cercopithecus aethiops</name>
    <dbReference type="NCBI Taxonomy" id="9534"/>
    <lineage>
        <taxon>Eukaryota</taxon>
        <taxon>Metazoa</taxon>
        <taxon>Chordata</taxon>
        <taxon>Craniata</taxon>
        <taxon>Vertebrata</taxon>
        <taxon>Euteleostomi</taxon>
        <taxon>Mammalia</taxon>
        <taxon>Eutheria</taxon>
        <taxon>Euarchontoglires</taxon>
        <taxon>Primates</taxon>
        <taxon>Haplorrhini</taxon>
        <taxon>Catarrhini</taxon>
        <taxon>Cercopithecidae</taxon>
        <taxon>Cercopithecinae</taxon>
        <taxon>Chlorocebus</taxon>
    </lineage>
</organism>
<proteinExistence type="inferred from homology"/>
<accession>P68304</accession>
<accession>P02796</accession>
<name>MT2_CHLAE</name>
<protein>
    <recommendedName>
        <fullName>Metallothionein-2</fullName>
        <shortName>MT-2</shortName>
    </recommendedName>
    <alternativeName>
        <fullName>Metallothionein-II</fullName>
        <shortName>MT-II</shortName>
    </alternativeName>
</protein>
<sequence length="61" mass="6097">MDPNCSCVAGDSCTCAGSCKCKECKCTSCKKSCCSCCPVGCAKCAQGCICKGASDKCNCCA</sequence>
<keyword id="KW-0007">Acetylation</keyword>
<keyword id="KW-0104">Cadmium</keyword>
<keyword id="KW-0479">Metal-binding</keyword>
<keyword id="KW-0480">Metal-thiolate cluster</keyword>
<keyword id="KW-0862">Zinc</keyword>